<gene>
    <name type="primary">DEFB135</name>
</gene>
<protein>
    <recommendedName>
        <fullName>Beta-defensin 135</fullName>
    </recommendedName>
    <alternativeName>
        <fullName>Defensin, beta 135</fullName>
    </alternativeName>
</protein>
<comment type="function">
    <text evidence="3">Has antibacterial activity.</text>
</comment>
<comment type="subcellular location">
    <subcellularLocation>
        <location evidence="3">Secreted</location>
    </subcellularLocation>
</comment>
<comment type="similarity">
    <text evidence="3">Belongs to the beta-defensin family.</text>
</comment>
<comment type="caution">
    <text evidence="3">Was termed (Ref.2) DEFB136.</text>
</comment>
<feature type="signal peptide" evidence="2">
    <location>
        <begin position="1"/>
        <end position="24"/>
    </location>
</feature>
<feature type="chain" id="PRO_0000045362" description="Beta-defensin 135">
    <location>
        <begin position="25"/>
        <end position="77"/>
    </location>
</feature>
<feature type="disulfide bond" evidence="1">
    <location>
        <begin position="37"/>
        <end position="64"/>
    </location>
</feature>
<feature type="disulfide bond" evidence="1">
    <location>
        <begin position="44"/>
        <end position="58"/>
    </location>
</feature>
<feature type="disulfide bond" evidence="1">
    <location>
        <begin position="48"/>
        <end position="65"/>
    </location>
</feature>
<dbReference type="EMBL" id="DQ012025">
    <property type="protein sequence ID" value="AAY59761.1"/>
    <property type="molecule type" value="mRNA"/>
</dbReference>
<dbReference type="EMBL" id="AY621332">
    <property type="protein sequence ID" value="AAT51871.1"/>
    <property type="molecule type" value="mRNA"/>
</dbReference>
<dbReference type="CCDS" id="CCDS43710.1"/>
<dbReference type="RefSeq" id="NP_001028189.2">
    <property type="nucleotide sequence ID" value="NM_001033017.3"/>
</dbReference>
<dbReference type="RefSeq" id="XP_016885979.1">
    <property type="nucleotide sequence ID" value="XM_017030490.1"/>
</dbReference>
<dbReference type="SMR" id="Q30KP9"/>
<dbReference type="BioGRID" id="534789">
    <property type="interactions" value="235"/>
</dbReference>
<dbReference type="FunCoup" id="Q30KP9">
    <property type="interactions" value="1"/>
</dbReference>
<dbReference type="IntAct" id="Q30KP9">
    <property type="interactions" value="41"/>
</dbReference>
<dbReference type="STRING" id="9606.ENSP00000371643"/>
<dbReference type="BioMuta" id="DEFB135"/>
<dbReference type="DMDM" id="84028897"/>
<dbReference type="PaxDb" id="9606-ENSP00000371643"/>
<dbReference type="DNASU" id="613209"/>
<dbReference type="Ensembl" id="ENST00000382208.3">
    <property type="protein sequence ID" value="ENSP00000371643.2"/>
    <property type="gene ID" value="ENSG00000205883.3"/>
</dbReference>
<dbReference type="Ensembl" id="ENST00000645596.2">
    <property type="protein sequence ID" value="ENSP00000495605.1"/>
    <property type="gene ID" value="ENSG00000285365.2"/>
</dbReference>
<dbReference type="GeneID" id="613209"/>
<dbReference type="KEGG" id="hsa:613209"/>
<dbReference type="MANE-Select" id="ENST00000382208.3">
    <property type="protein sequence ID" value="ENSP00000371643.2"/>
    <property type="RefSeq nucleotide sequence ID" value="NM_001033017.3"/>
    <property type="RefSeq protein sequence ID" value="NP_001028189.2"/>
</dbReference>
<dbReference type="UCSC" id="uc003wuw.1">
    <property type="organism name" value="human"/>
</dbReference>
<dbReference type="AGR" id="HGNC:32400"/>
<dbReference type="CTD" id="613209"/>
<dbReference type="GeneCards" id="DEFB135"/>
<dbReference type="HGNC" id="HGNC:32400">
    <property type="gene designation" value="DEFB135"/>
</dbReference>
<dbReference type="HPA" id="ENSG00000205883">
    <property type="expression patterns" value="Tissue enriched (epididymis)"/>
</dbReference>
<dbReference type="neXtProt" id="NX_Q30KP9"/>
<dbReference type="PharmGKB" id="PA165585476"/>
<dbReference type="VEuPathDB" id="HostDB:ENSG00000205883"/>
<dbReference type="eggNOG" id="ENOG502TF02">
    <property type="taxonomic scope" value="Eukaryota"/>
</dbReference>
<dbReference type="GeneTree" id="ENSGT00530000064429"/>
<dbReference type="HOGENOM" id="CLU_181906_3_0_1"/>
<dbReference type="InParanoid" id="Q30KP9"/>
<dbReference type="OMA" id="NTCWRTK"/>
<dbReference type="OrthoDB" id="9534593at2759"/>
<dbReference type="PAN-GO" id="Q30KP9">
    <property type="GO annotations" value="0 GO annotations based on evolutionary models"/>
</dbReference>
<dbReference type="PhylomeDB" id="Q30KP9"/>
<dbReference type="PathwayCommons" id="Q30KP9"/>
<dbReference type="Reactome" id="R-HSA-1461957">
    <property type="pathway name" value="Beta defensins"/>
</dbReference>
<dbReference type="Reactome" id="R-HSA-1461973">
    <property type="pathway name" value="Defensins"/>
</dbReference>
<dbReference type="BioGRID-ORCS" id="613209">
    <property type="hits" value="13 hits in 1138 CRISPR screens"/>
</dbReference>
<dbReference type="Pharos" id="Q30KP9">
    <property type="development level" value="Tdark"/>
</dbReference>
<dbReference type="PRO" id="PR:Q30KP9"/>
<dbReference type="Proteomes" id="UP000005640">
    <property type="component" value="Chromosome 8"/>
</dbReference>
<dbReference type="RNAct" id="Q30KP9">
    <property type="molecule type" value="protein"/>
</dbReference>
<dbReference type="Bgee" id="ENSG00000205883">
    <property type="expression patterns" value="Expressed in male germ line stem cell (sensu Vertebrata) in testis and 68 other cell types or tissues"/>
</dbReference>
<dbReference type="GO" id="GO:0005576">
    <property type="term" value="C:extracellular region"/>
    <property type="evidence" value="ECO:0007669"/>
    <property type="project" value="UniProtKB-SubCell"/>
</dbReference>
<dbReference type="GO" id="GO:0050829">
    <property type="term" value="P:defense response to Gram-negative bacterium"/>
    <property type="evidence" value="ECO:0007669"/>
    <property type="project" value="UniProtKB-ARBA"/>
</dbReference>
<dbReference type="GO" id="GO:0045087">
    <property type="term" value="P:innate immune response"/>
    <property type="evidence" value="ECO:0007669"/>
    <property type="project" value="InterPro"/>
</dbReference>
<dbReference type="Gene3D" id="3.10.360.10">
    <property type="entry name" value="Antimicrobial Peptide, Beta-defensin 2, Chain A"/>
    <property type="match status" value="1"/>
</dbReference>
<dbReference type="InterPro" id="IPR050544">
    <property type="entry name" value="Beta-defensin"/>
</dbReference>
<dbReference type="InterPro" id="IPR025933">
    <property type="entry name" value="Beta_defensin_dom"/>
</dbReference>
<dbReference type="PANTHER" id="PTHR15001">
    <property type="entry name" value="BETA-DEFENSIN 123-RELATED"/>
    <property type="match status" value="1"/>
</dbReference>
<dbReference type="PANTHER" id="PTHR15001:SF10">
    <property type="entry name" value="BETA-DEFENSIN 135"/>
    <property type="match status" value="1"/>
</dbReference>
<dbReference type="Pfam" id="PF13841">
    <property type="entry name" value="Defensin_beta_2"/>
    <property type="match status" value="1"/>
</dbReference>
<evidence type="ECO:0000250" key="1"/>
<evidence type="ECO:0000255" key="2"/>
<evidence type="ECO:0000305" key="3"/>
<name>DB135_HUMAN</name>
<organism>
    <name type="scientific">Homo sapiens</name>
    <name type="common">Human</name>
    <dbReference type="NCBI Taxonomy" id="9606"/>
    <lineage>
        <taxon>Eukaryota</taxon>
        <taxon>Metazoa</taxon>
        <taxon>Chordata</taxon>
        <taxon>Craniata</taxon>
        <taxon>Vertebrata</taxon>
        <taxon>Euteleostomi</taxon>
        <taxon>Mammalia</taxon>
        <taxon>Eutheria</taxon>
        <taxon>Euarchontoglires</taxon>
        <taxon>Primates</taxon>
        <taxon>Haplorrhini</taxon>
        <taxon>Catarrhini</taxon>
        <taxon>Hominidae</taxon>
        <taxon>Homo</taxon>
    </lineage>
</organism>
<sequence length="77" mass="8754">MATRSVLLALVVLNLLFYVPPGRSGPNVYIQKIFASCWRLQGTCRPKCLKNEQYRILCDTIHLCCVNPKYLPILTGK</sequence>
<keyword id="KW-0044">Antibiotic</keyword>
<keyword id="KW-0929">Antimicrobial</keyword>
<keyword id="KW-0211">Defensin</keyword>
<keyword id="KW-1015">Disulfide bond</keyword>
<keyword id="KW-1185">Reference proteome</keyword>
<keyword id="KW-0964">Secreted</keyword>
<keyword id="KW-0732">Signal</keyword>
<accession>Q30KP9</accession>
<accession>Q4QY37</accession>
<reference key="1">
    <citation type="journal article" date="2005" name="Physiol. Genomics">
        <title>Cross-species analysis of the mammalian beta-defensin gene family: presence of syntenic gene clusters and preferential expression in the male reproductive tract.</title>
        <authorList>
            <person name="Patil A.A."/>
            <person name="Cai Y."/>
            <person name="Sang Y."/>
            <person name="Blecha F."/>
            <person name="Zhang G."/>
        </authorList>
    </citation>
    <scope>NUCLEOTIDE SEQUENCE [MRNA]</scope>
</reference>
<reference key="2">
    <citation type="submission" date="2004-05" db="EMBL/GenBank/DDBJ databases">
        <title>Genome-wide analysis of rat beta-defensins: evidence for the existence of four syntenic defensin gene clusters in mammals.</title>
        <authorList>
            <person name="Patil A."/>
            <person name="Zhang G."/>
        </authorList>
    </citation>
    <scope>NUCLEOTIDE SEQUENCE [MRNA] OF 1-66</scope>
</reference>
<proteinExistence type="inferred from homology"/>